<reference key="1">
    <citation type="submission" date="2009-01" db="EMBL/GenBank/DDBJ databases">
        <title>Complete sequence of Geobacter sp. FRC-32.</title>
        <authorList>
            <consortium name="US DOE Joint Genome Institute"/>
            <person name="Lucas S."/>
            <person name="Copeland A."/>
            <person name="Lapidus A."/>
            <person name="Glavina del Rio T."/>
            <person name="Dalin E."/>
            <person name="Tice H."/>
            <person name="Bruce D."/>
            <person name="Goodwin L."/>
            <person name="Pitluck S."/>
            <person name="Saunders E."/>
            <person name="Brettin T."/>
            <person name="Detter J.C."/>
            <person name="Han C."/>
            <person name="Larimer F."/>
            <person name="Land M."/>
            <person name="Hauser L."/>
            <person name="Kyrpides N."/>
            <person name="Ovchinnikova G."/>
            <person name="Kostka J."/>
            <person name="Richardson P."/>
        </authorList>
    </citation>
    <scope>NUCLEOTIDE SEQUENCE [LARGE SCALE GENOMIC DNA]</scope>
    <source>
        <strain>DSM 22248 / JCM 15807 / FRC-32</strain>
    </source>
</reference>
<organism>
    <name type="scientific">Geotalea daltonii (strain DSM 22248 / JCM 15807 / FRC-32)</name>
    <name type="common">Geobacter daltonii</name>
    <dbReference type="NCBI Taxonomy" id="316067"/>
    <lineage>
        <taxon>Bacteria</taxon>
        <taxon>Pseudomonadati</taxon>
        <taxon>Thermodesulfobacteriota</taxon>
        <taxon>Desulfuromonadia</taxon>
        <taxon>Geobacterales</taxon>
        <taxon>Geobacteraceae</taxon>
        <taxon>Geotalea</taxon>
    </lineage>
</organism>
<name>Y344_GEODF</name>
<feature type="chain" id="PRO_1000166688" description="UPF0391 membrane protein Geob_0344">
    <location>
        <begin position="1"/>
        <end position="59"/>
    </location>
</feature>
<feature type="transmembrane region" description="Helical" evidence="1">
    <location>
        <begin position="4"/>
        <end position="24"/>
    </location>
</feature>
<feature type="transmembrane region" description="Helical" evidence="1">
    <location>
        <begin position="33"/>
        <end position="53"/>
    </location>
</feature>
<accession>B9LYY3</accession>
<gene>
    <name type="ordered locus">Geob_0344</name>
</gene>
<proteinExistence type="inferred from homology"/>
<protein>
    <recommendedName>
        <fullName evidence="1">UPF0391 membrane protein Geob_0344</fullName>
    </recommendedName>
</protein>
<comment type="subcellular location">
    <subcellularLocation>
        <location evidence="1">Cell membrane</location>
        <topology evidence="1">Multi-pass membrane protein</topology>
    </subcellularLocation>
</comment>
<comment type="similarity">
    <text evidence="1">Belongs to the UPF0391 family.</text>
</comment>
<evidence type="ECO:0000255" key="1">
    <source>
        <dbReference type="HAMAP-Rule" id="MF_01361"/>
    </source>
</evidence>
<dbReference type="EMBL" id="CP001390">
    <property type="protein sequence ID" value="ACM18715.1"/>
    <property type="molecule type" value="Genomic_DNA"/>
</dbReference>
<dbReference type="RefSeq" id="WP_012645444.1">
    <property type="nucleotide sequence ID" value="NC_011979.1"/>
</dbReference>
<dbReference type="STRING" id="316067.Geob_0344"/>
<dbReference type="KEGG" id="geo:Geob_0344"/>
<dbReference type="eggNOG" id="ENOG5033EXZ">
    <property type="taxonomic scope" value="Bacteria"/>
</dbReference>
<dbReference type="HOGENOM" id="CLU_187346_1_0_7"/>
<dbReference type="Proteomes" id="UP000007721">
    <property type="component" value="Chromosome"/>
</dbReference>
<dbReference type="GO" id="GO:0005886">
    <property type="term" value="C:plasma membrane"/>
    <property type="evidence" value="ECO:0007669"/>
    <property type="project" value="UniProtKB-SubCell"/>
</dbReference>
<dbReference type="HAMAP" id="MF_01361">
    <property type="entry name" value="UPF0391"/>
    <property type="match status" value="1"/>
</dbReference>
<dbReference type="InterPro" id="IPR009760">
    <property type="entry name" value="DUF1328"/>
</dbReference>
<dbReference type="NCBIfam" id="NF010226">
    <property type="entry name" value="PRK13682.1-1"/>
    <property type="match status" value="1"/>
</dbReference>
<dbReference type="NCBIfam" id="NF010229">
    <property type="entry name" value="PRK13682.1-4"/>
    <property type="match status" value="1"/>
</dbReference>
<dbReference type="Pfam" id="PF07043">
    <property type="entry name" value="DUF1328"/>
    <property type="match status" value="1"/>
</dbReference>
<dbReference type="PIRSF" id="PIRSF036466">
    <property type="entry name" value="UCP036466"/>
    <property type="match status" value="1"/>
</dbReference>
<keyword id="KW-1003">Cell membrane</keyword>
<keyword id="KW-0472">Membrane</keyword>
<keyword id="KW-1185">Reference proteome</keyword>
<keyword id="KW-0812">Transmembrane</keyword>
<keyword id="KW-1133">Transmembrane helix</keyword>
<sequence length="59" mass="6266">MLRWAAIFFIIAIVAAVFGFTGIASAAAGIAKFLFILFLVVALIMLILGITAGTKITRH</sequence>